<name>RL44_BRUMA</name>
<evidence type="ECO:0000250" key="1"/>
<evidence type="ECO:0000256" key="2">
    <source>
        <dbReference type="SAM" id="MobiDB-lite"/>
    </source>
</evidence>
<evidence type="ECO:0000305" key="3"/>
<gene>
    <name type="primary">rpl-44</name>
</gene>
<feature type="initiator methionine" description="Removed" evidence="1">
    <location>
        <position position="1"/>
    </location>
</feature>
<feature type="chain" id="PRO_0000149126" description="Large ribosomal subunit protein eL42">
    <location>
        <begin position="2"/>
        <end position="105"/>
    </location>
</feature>
<feature type="region of interest" description="Disordered" evidence="2">
    <location>
        <begin position="23"/>
        <end position="52"/>
    </location>
</feature>
<feature type="compositionally biased region" description="Basic and acidic residues" evidence="2">
    <location>
        <begin position="29"/>
        <end position="46"/>
    </location>
</feature>
<sequence length="105" mass="12450">MVNVPKTRRTFCDGKCRRHTMHKVTQYKKGKESRLAQGRRRYDSKQKGFGGQTKPIFRKKAKTTKKIVLRMECTECKHRKQLPIKRCKHFELGGQKKTRGQVIQF</sequence>
<protein>
    <recommendedName>
        <fullName evidence="3">Large ribosomal subunit protein eL42</fullName>
    </recommendedName>
    <alternativeName>
        <fullName>60S ribosomal protein L44</fullName>
    </alternativeName>
</protein>
<organism>
    <name type="scientific">Brugia malayi</name>
    <name type="common">Filarial nematode worm</name>
    <dbReference type="NCBI Taxonomy" id="6279"/>
    <lineage>
        <taxon>Eukaryota</taxon>
        <taxon>Metazoa</taxon>
        <taxon>Ecdysozoa</taxon>
        <taxon>Nematoda</taxon>
        <taxon>Chromadorea</taxon>
        <taxon>Rhabditida</taxon>
        <taxon>Spirurina</taxon>
        <taxon>Spiruromorpha</taxon>
        <taxon>Filarioidea</taxon>
        <taxon>Onchocercidae</taxon>
        <taxon>Brugia</taxon>
    </lineage>
</organism>
<comment type="similarity">
    <text evidence="3">Belongs to the eukaryotic ribosomal protein eL42 family.</text>
</comment>
<keyword id="KW-1185">Reference proteome</keyword>
<keyword id="KW-0687">Ribonucleoprotein</keyword>
<keyword id="KW-0689">Ribosomal protein</keyword>
<reference key="1">
    <citation type="journal article" date="1997" name="Mol. Biochem. Parasitol.">
        <title>Differentially expressed, abundant trans-spliced cDNAs from larval Brugia malayi.</title>
        <authorList>
            <person name="Gregory W.F."/>
            <person name="Blaxter M.L."/>
            <person name="Maizels R.M."/>
        </authorList>
    </citation>
    <scope>NUCLEOTIDE SEQUENCE [MRNA]</scope>
</reference>
<dbReference type="EMBL" id="U80976">
    <property type="protein sequence ID" value="AAC47627.1"/>
    <property type="molecule type" value="mRNA"/>
</dbReference>
<dbReference type="SMR" id="P90702"/>
<dbReference type="FunCoup" id="P90702">
    <property type="interactions" value="1373"/>
</dbReference>
<dbReference type="STRING" id="6279.P90702"/>
<dbReference type="EnsemblMetazoa" id="Bm14073.1">
    <property type="protein sequence ID" value="Bm14073.1"/>
    <property type="gene ID" value="WBGene00234334"/>
</dbReference>
<dbReference type="HOGENOM" id="CLU_114645_2_1_1"/>
<dbReference type="InParanoid" id="P90702"/>
<dbReference type="OMA" id="CKKHTIH"/>
<dbReference type="OrthoDB" id="2967263at2759"/>
<dbReference type="Proteomes" id="UP000006672">
    <property type="component" value="Unassembled WGS sequence"/>
</dbReference>
<dbReference type="GO" id="GO:1990904">
    <property type="term" value="C:ribonucleoprotein complex"/>
    <property type="evidence" value="ECO:0007669"/>
    <property type="project" value="UniProtKB-KW"/>
</dbReference>
<dbReference type="GO" id="GO:0005840">
    <property type="term" value="C:ribosome"/>
    <property type="evidence" value="ECO:0007669"/>
    <property type="project" value="UniProtKB-KW"/>
</dbReference>
<dbReference type="GO" id="GO:0003735">
    <property type="term" value="F:structural constituent of ribosome"/>
    <property type="evidence" value="ECO:0007669"/>
    <property type="project" value="InterPro"/>
</dbReference>
<dbReference type="GO" id="GO:0006412">
    <property type="term" value="P:translation"/>
    <property type="evidence" value="ECO:0007669"/>
    <property type="project" value="InterPro"/>
</dbReference>
<dbReference type="FunFam" id="3.10.450.80:FF:000001">
    <property type="entry name" value="60S ribosomal protein L44"/>
    <property type="match status" value="1"/>
</dbReference>
<dbReference type="Gene3D" id="3.10.450.80">
    <property type="match status" value="1"/>
</dbReference>
<dbReference type="InterPro" id="IPR000552">
    <property type="entry name" value="Ribosomal_eL44"/>
</dbReference>
<dbReference type="InterPro" id="IPR053708">
    <property type="entry name" value="Ribosomal_LSU_eL42"/>
</dbReference>
<dbReference type="InterPro" id="IPR011332">
    <property type="entry name" value="Ribosomal_zn-bd"/>
</dbReference>
<dbReference type="PANTHER" id="PTHR10369">
    <property type="entry name" value="60S RIBOSOMAL PROTEIN L36A/L44"/>
    <property type="match status" value="1"/>
</dbReference>
<dbReference type="Pfam" id="PF00935">
    <property type="entry name" value="Ribosomal_L44"/>
    <property type="match status" value="1"/>
</dbReference>
<dbReference type="SUPFAM" id="SSF57829">
    <property type="entry name" value="Zn-binding ribosomal proteins"/>
    <property type="match status" value="1"/>
</dbReference>
<dbReference type="PROSITE" id="PS01172">
    <property type="entry name" value="RIBOSOMAL_L44E"/>
    <property type="match status" value="1"/>
</dbReference>
<proteinExistence type="inferred from homology"/>
<accession>P90702</accession>